<protein>
    <recommendedName>
        <fullName>Ovomucoid</fullName>
    </recommendedName>
</protein>
<sequence length="56" mass="6039">LAAVSVDCSEYPKPACTMEYRPLCGSDNKTYGNKCNFCNAVVESNGTLTLSHFGKC</sequence>
<reference key="1">
    <citation type="journal article" date="1987" name="Biochemistry">
        <title>Ovomucoid third domains from 100 avian species: isolation, sequences, and hypervariability of enzyme-inhibitor contact residues.</title>
        <authorList>
            <person name="Laskowski M. Jr."/>
            <person name="Kato I."/>
            <person name="Ardelt W."/>
            <person name="Cook J."/>
            <person name="Denton A."/>
            <person name="Empie M.W."/>
            <person name="Kohr W.J."/>
            <person name="Park S.J."/>
            <person name="Parks K."/>
            <person name="Schatzley B.L."/>
            <person name="Schoenberger O.L."/>
            <person name="Tashiro M."/>
            <person name="Vichot G."/>
            <person name="Whatley H.E."/>
            <person name="Wieczorek A."/>
            <person name="Wieczorek M."/>
        </authorList>
    </citation>
    <scope>PROTEIN SEQUENCE</scope>
</reference>
<proteinExistence type="evidence at protein level"/>
<accession>P67958</accession>
<accession>P05586</accession>
<dbReference type="SMR" id="P67958"/>
<dbReference type="GO" id="GO:0005615">
    <property type="term" value="C:extracellular space"/>
    <property type="evidence" value="ECO:0007669"/>
    <property type="project" value="UniProtKB-ARBA"/>
</dbReference>
<dbReference type="GO" id="GO:0004867">
    <property type="term" value="F:serine-type endopeptidase inhibitor activity"/>
    <property type="evidence" value="ECO:0007669"/>
    <property type="project" value="UniProtKB-KW"/>
</dbReference>
<dbReference type="CDD" id="cd00104">
    <property type="entry name" value="KAZAL_FS"/>
    <property type="match status" value="1"/>
</dbReference>
<dbReference type="FunFam" id="3.30.60.30:FF:000037">
    <property type="entry name" value="Ovomucoid"/>
    <property type="match status" value="1"/>
</dbReference>
<dbReference type="Gene3D" id="3.30.60.30">
    <property type="match status" value="1"/>
</dbReference>
<dbReference type="InterPro" id="IPR051597">
    <property type="entry name" value="Bifunctional_prot_inhibitor"/>
</dbReference>
<dbReference type="InterPro" id="IPR002350">
    <property type="entry name" value="Kazal_dom"/>
</dbReference>
<dbReference type="InterPro" id="IPR036058">
    <property type="entry name" value="Kazal_dom_sf"/>
</dbReference>
<dbReference type="InterPro" id="IPR001239">
    <property type="entry name" value="Prot_inh_Kazal-m"/>
</dbReference>
<dbReference type="PANTHER" id="PTHR47729:SF1">
    <property type="entry name" value="OVOMUCOID-LIKE-RELATED"/>
    <property type="match status" value="1"/>
</dbReference>
<dbReference type="PANTHER" id="PTHR47729">
    <property type="entry name" value="SERINE PEPTIDASE INHIBITOR, KAZAL TYPE 2, TANDEM DUPLICATE 1-RELATED"/>
    <property type="match status" value="1"/>
</dbReference>
<dbReference type="Pfam" id="PF00050">
    <property type="entry name" value="Kazal_1"/>
    <property type="match status" value="1"/>
</dbReference>
<dbReference type="PRINTS" id="PR00290">
    <property type="entry name" value="KAZALINHBTR"/>
</dbReference>
<dbReference type="SMART" id="SM00280">
    <property type="entry name" value="KAZAL"/>
    <property type="match status" value="1"/>
</dbReference>
<dbReference type="SUPFAM" id="SSF100895">
    <property type="entry name" value="Kazal-type serine protease inhibitors"/>
    <property type="match status" value="1"/>
</dbReference>
<dbReference type="PROSITE" id="PS00282">
    <property type="entry name" value="KAZAL_1"/>
    <property type="match status" value="1"/>
</dbReference>
<dbReference type="PROSITE" id="PS51465">
    <property type="entry name" value="KAZAL_2"/>
    <property type="match status" value="1"/>
</dbReference>
<comment type="subcellular location">
    <subcellularLocation>
        <location>Secreted</location>
    </subcellularLocation>
</comment>
<comment type="domain">
    <text>Avian ovomucoid consists of three homologous, tandem Kazal family inhibitory domains.</text>
</comment>
<keyword id="KW-0903">Direct protein sequencing</keyword>
<keyword id="KW-1015">Disulfide bond</keyword>
<keyword id="KW-0325">Glycoprotein</keyword>
<keyword id="KW-0646">Protease inhibitor</keyword>
<keyword id="KW-0677">Repeat</keyword>
<keyword id="KW-0964">Secreted</keyword>
<keyword id="KW-0722">Serine protease inhibitor</keyword>
<feature type="chain" id="PRO_0000073180" description="Ovomucoid">
    <location>
        <begin position="1" status="less than"/>
        <end position="56" status="greater than"/>
    </location>
</feature>
<feature type="domain" description="Kazal-like" evidence="1">
    <location>
        <begin position="6"/>
        <end position="56"/>
    </location>
</feature>
<feature type="site" description="Reactive bond 3">
    <location>
        <begin position="18"/>
        <end position="19"/>
    </location>
</feature>
<feature type="glycosylation site" description="N-linked (GlcNAc...) asparagine">
    <location>
        <position position="45"/>
    </location>
</feature>
<feature type="disulfide bond">
    <location>
        <begin position="8"/>
        <end position="38"/>
    </location>
</feature>
<feature type="disulfide bond">
    <location>
        <begin position="16"/>
        <end position="35"/>
    </location>
</feature>
<feature type="disulfide bond">
    <location>
        <begin position="24"/>
        <end position="56"/>
    </location>
</feature>
<feature type="non-terminal residue">
    <location>
        <position position="1"/>
    </location>
</feature>
<feature type="non-terminal residue">
    <location>
        <position position="56"/>
    </location>
</feature>
<name>IOVO_SYREL</name>
<organism>
    <name type="scientific">Syrmaticus ellioti</name>
    <name type="common">Elliot's pheasant</name>
    <name type="synonym">Phasianus ellioti</name>
    <dbReference type="NCBI Taxonomy" id="9063"/>
    <lineage>
        <taxon>Eukaryota</taxon>
        <taxon>Metazoa</taxon>
        <taxon>Chordata</taxon>
        <taxon>Craniata</taxon>
        <taxon>Vertebrata</taxon>
        <taxon>Euteleostomi</taxon>
        <taxon>Archelosauria</taxon>
        <taxon>Archosauria</taxon>
        <taxon>Dinosauria</taxon>
        <taxon>Saurischia</taxon>
        <taxon>Theropoda</taxon>
        <taxon>Coelurosauria</taxon>
        <taxon>Aves</taxon>
        <taxon>Neognathae</taxon>
        <taxon>Galloanserae</taxon>
        <taxon>Galliformes</taxon>
        <taxon>Phasianidae</taxon>
        <taxon>Phasianinae</taxon>
        <taxon>Syrmaticus</taxon>
    </lineage>
</organism>
<evidence type="ECO:0000255" key="1">
    <source>
        <dbReference type="PROSITE-ProRule" id="PRU00798"/>
    </source>
</evidence>